<accession>Q9ZE97</accession>
<dbReference type="EMBL" id="AJ235270">
    <property type="protein sequence ID" value="CAA14519.1"/>
    <property type="molecule type" value="Genomic_DNA"/>
</dbReference>
<dbReference type="PIR" id="H71712">
    <property type="entry name" value="H71712"/>
</dbReference>
<dbReference type="RefSeq" id="NP_220442.1">
    <property type="nucleotide sequence ID" value="NC_000963.1"/>
</dbReference>
<dbReference type="RefSeq" id="WP_004596627.1">
    <property type="nucleotide sequence ID" value="NC_000963.1"/>
</dbReference>
<dbReference type="SMR" id="Q9ZE97"/>
<dbReference type="STRING" id="272947.gene:17555131"/>
<dbReference type="EnsemblBacteria" id="CAA14519">
    <property type="protein sequence ID" value="CAA14519"/>
    <property type="gene ID" value="CAA14519"/>
</dbReference>
<dbReference type="GeneID" id="57569176"/>
<dbReference type="KEGG" id="rpr:RP048"/>
<dbReference type="PATRIC" id="fig|272947.5.peg.49"/>
<dbReference type="eggNOG" id="COG0706">
    <property type="taxonomic scope" value="Bacteria"/>
</dbReference>
<dbReference type="HOGENOM" id="CLU_016535_1_0_5"/>
<dbReference type="OrthoDB" id="9780552at2"/>
<dbReference type="Proteomes" id="UP000002480">
    <property type="component" value="Chromosome"/>
</dbReference>
<dbReference type="GO" id="GO:0005886">
    <property type="term" value="C:plasma membrane"/>
    <property type="evidence" value="ECO:0007669"/>
    <property type="project" value="UniProtKB-SubCell"/>
</dbReference>
<dbReference type="GO" id="GO:0032977">
    <property type="term" value="F:membrane insertase activity"/>
    <property type="evidence" value="ECO:0007669"/>
    <property type="project" value="InterPro"/>
</dbReference>
<dbReference type="GO" id="GO:0051205">
    <property type="term" value="P:protein insertion into membrane"/>
    <property type="evidence" value="ECO:0007669"/>
    <property type="project" value="TreeGrafter"/>
</dbReference>
<dbReference type="GO" id="GO:0015031">
    <property type="term" value="P:protein transport"/>
    <property type="evidence" value="ECO:0007669"/>
    <property type="project" value="UniProtKB-KW"/>
</dbReference>
<dbReference type="CDD" id="cd20070">
    <property type="entry name" value="5TM_YidC_Alb3"/>
    <property type="match status" value="1"/>
</dbReference>
<dbReference type="CDD" id="cd19961">
    <property type="entry name" value="EcYidC-like_peri"/>
    <property type="match status" value="1"/>
</dbReference>
<dbReference type="Gene3D" id="2.70.98.90">
    <property type="match status" value="1"/>
</dbReference>
<dbReference type="HAMAP" id="MF_01810">
    <property type="entry name" value="YidC_type1"/>
    <property type="match status" value="1"/>
</dbReference>
<dbReference type="InterPro" id="IPR019998">
    <property type="entry name" value="Membr_insert_YidC"/>
</dbReference>
<dbReference type="InterPro" id="IPR028053">
    <property type="entry name" value="Membr_insert_YidC_N"/>
</dbReference>
<dbReference type="InterPro" id="IPR001708">
    <property type="entry name" value="YidC/ALB3/OXA1/COX18"/>
</dbReference>
<dbReference type="InterPro" id="IPR028055">
    <property type="entry name" value="YidC/Oxa/ALB_C"/>
</dbReference>
<dbReference type="InterPro" id="IPR047196">
    <property type="entry name" value="YidC_ALB_C"/>
</dbReference>
<dbReference type="InterPro" id="IPR038221">
    <property type="entry name" value="YidC_periplasmic_sf"/>
</dbReference>
<dbReference type="NCBIfam" id="NF002353">
    <property type="entry name" value="PRK01318.1-4"/>
    <property type="match status" value="1"/>
</dbReference>
<dbReference type="NCBIfam" id="TIGR03593">
    <property type="entry name" value="yidC_nterm"/>
    <property type="match status" value="1"/>
</dbReference>
<dbReference type="NCBIfam" id="TIGR03592">
    <property type="entry name" value="yidC_oxa1_cterm"/>
    <property type="match status" value="1"/>
</dbReference>
<dbReference type="PANTHER" id="PTHR12428:SF65">
    <property type="entry name" value="CYTOCHROME C OXIDASE ASSEMBLY PROTEIN COX18, MITOCHONDRIAL"/>
    <property type="match status" value="1"/>
</dbReference>
<dbReference type="PANTHER" id="PTHR12428">
    <property type="entry name" value="OXA1"/>
    <property type="match status" value="1"/>
</dbReference>
<dbReference type="Pfam" id="PF02096">
    <property type="entry name" value="60KD_IMP"/>
    <property type="match status" value="1"/>
</dbReference>
<dbReference type="Pfam" id="PF14849">
    <property type="entry name" value="YidC_periplas"/>
    <property type="match status" value="1"/>
</dbReference>
<dbReference type="PRINTS" id="PR00701">
    <property type="entry name" value="60KDINNERMP"/>
</dbReference>
<dbReference type="PRINTS" id="PR01900">
    <property type="entry name" value="YIDCPROTEIN"/>
</dbReference>
<reference key="1">
    <citation type="journal article" date="1998" name="Nature">
        <title>The genome sequence of Rickettsia prowazekii and the origin of mitochondria.</title>
        <authorList>
            <person name="Andersson S.G.E."/>
            <person name="Zomorodipour A."/>
            <person name="Andersson J.O."/>
            <person name="Sicheritz-Ponten T."/>
            <person name="Alsmark U.C.M."/>
            <person name="Podowski R.M."/>
            <person name="Naeslund A.K."/>
            <person name="Eriksson A.-S."/>
            <person name="Winkler H.H."/>
            <person name="Kurland C.G."/>
        </authorList>
    </citation>
    <scope>NUCLEOTIDE SEQUENCE [LARGE SCALE GENOMIC DNA]</scope>
    <source>
        <strain>Madrid E</strain>
    </source>
</reference>
<name>YIDC_RICPR</name>
<comment type="function">
    <text evidence="1">Required for the insertion and/or proper folding and/or complex formation of integral membrane proteins into the membrane. Involved in integration of membrane proteins that insert both dependently and independently of the Sec translocase complex, as well as at least some lipoproteins. Aids folding of multispanning membrane proteins.</text>
</comment>
<comment type="subunit">
    <text evidence="1">Interacts with the Sec translocase complex via SecD. Specifically interacts with transmembrane segments of nascent integral membrane proteins during membrane integration.</text>
</comment>
<comment type="subcellular location">
    <subcellularLocation>
        <location evidence="1">Cell inner membrane</location>
        <topology evidence="1">Multi-pass membrane protein</topology>
    </subcellularLocation>
</comment>
<comment type="similarity">
    <text evidence="1">Belongs to the OXA1/ALB3/YidC family. Type 1 subfamily.</text>
</comment>
<keyword id="KW-0997">Cell inner membrane</keyword>
<keyword id="KW-1003">Cell membrane</keyword>
<keyword id="KW-0143">Chaperone</keyword>
<keyword id="KW-0472">Membrane</keyword>
<keyword id="KW-0653">Protein transport</keyword>
<keyword id="KW-1185">Reference proteome</keyword>
<keyword id="KW-0812">Transmembrane</keyword>
<keyword id="KW-1133">Transmembrane helix</keyword>
<keyword id="KW-0813">Transport</keyword>
<feature type="chain" id="PRO_0000124750" description="Membrane protein insertase YidC">
    <location>
        <begin position="1"/>
        <end position="560"/>
    </location>
</feature>
<feature type="transmembrane region" description="Helical" evidence="1">
    <location>
        <begin position="5"/>
        <end position="25"/>
    </location>
</feature>
<feature type="transmembrane region" description="Helical" evidence="1">
    <location>
        <begin position="334"/>
        <end position="354"/>
    </location>
</feature>
<feature type="transmembrane region" description="Helical" evidence="1">
    <location>
        <begin position="357"/>
        <end position="377"/>
    </location>
</feature>
<feature type="transmembrane region" description="Helical" evidence="1">
    <location>
        <begin position="431"/>
        <end position="451"/>
    </location>
</feature>
<feature type="transmembrane region" description="Helical" evidence="1">
    <location>
        <begin position="476"/>
        <end position="496"/>
    </location>
</feature>
<feature type="transmembrane region" description="Helical" evidence="1">
    <location>
        <begin position="522"/>
        <end position="542"/>
    </location>
</feature>
<organism>
    <name type="scientific">Rickettsia prowazekii (strain Madrid E)</name>
    <dbReference type="NCBI Taxonomy" id="272947"/>
    <lineage>
        <taxon>Bacteria</taxon>
        <taxon>Pseudomonadati</taxon>
        <taxon>Pseudomonadota</taxon>
        <taxon>Alphaproteobacteria</taxon>
        <taxon>Rickettsiales</taxon>
        <taxon>Rickettsiaceae</taxon>
        <taxon>Rickettsieae</taxon>
        <taxon>Rickettsia</taxon>
        <taxon>typhus group</taxon>
    </lineage>
</organism>
<gene>
    <name evidence="1" type="primary">yidC</name>
    <name type="ordered locus">RP048</name>
</gene>
<proteinExistence type="inferred from homology"/>
<sequence length="560" mass="64433">MNNNIINLIAAVVLSLSIIFGWQYFFVKPEQKKQQQRIAMHKSENLNKQKLKALAEPASDIAVQEASQVQRIKIESESLTGSIALKGLRFDDLILKKYKQDLSQNSPAVRLFSPANTENAYFAEIGLVSNLNSVKLPNSNTVWNSDSEVLSPEKPVNLFWINEDGIKFLVTITVDKNYLFTIEQTIINNSDKELPVQSYGLINRKYISLEKAVNILHQGPIGCIDENLKEYSYDDIKDKKSTKFALSKVDWIGITDKYWLSSLIPDKSSRYSSNFNYALKQGTERYQVDFISPVQVIKPGENLSIKSRIFAGAKKVDLLDEYEKSYDIKLFDRAIDFGWFYIITKPVFYAMNFFYGYVGNFGISILIVTVIIKLLMFTLANKSYRSMKKMKNLQPEIDRIKNLYNNDKARLNQEIMALYKKEKVNPVAGCLPILVQIPVFFSIYKVLYVTIEMRQAPFFGWIKDLSSPDPTTIFNLFGLLPFAPPSFLMIGAWPILMAITMFLHQKMSPELADPIQAQVMKFMPLIFLFMFSSFPVGLLIYWSWNNILSIIQQYYINKFN</sequence>
<evidence type="ECO:0000255" key="1">
    <source>
        <dbReference type="HAMAP-Rule" id="MF_01810"/>
    </source>
</evidence>
<protein>
    <recommendedName>
        <fullName evidence="1">Membrane protein insertase YidC</fullName>
    </recommendedName>
    <alternativeName>
        <fullName evidence="1">Foldase YidC</fullName>
    </alternativeName>
    <alternativeName>
        <fullName evidence="1">Membrane integrase YidC</fullName>
    </alternativeName>
    <alternativeName>
        <fullName evidence="1">Membrane protein YidC</fullName>
    </alternativeName>
</protein>